<comment type="function">
    <text evidence="3">Cyclic nucleotide phosphodiesterase with a dual specificity for the second messengers cAMP and cGMP, which are key regulators of many important physiological processes. Has a preference for cGMP as a substrate.</text>
</comment>
<comment type="catalytic activity">
    <reaction evidence="3">
        <text>a nucleoside 3',5'-cyclic phosphate + H2O = a nucleoside 5'-phosphate + H(+)</text>
        <dbReference type="Rhea" id="RHEA:14653"/>
        <dbReference type="ChEBI" id="CHEBI:15377"/>
        <dbReference type="ChEBI" id="CHEBI:15378"/>
        <dbReference type="ChEBI" id="CHEBI:57867"/>
        <dbReference type="ChEBI" id="CHEBI:58464"/>
        <dbReference type="EC" id="3.1.4.17"/>
    </reaction>
    <physiologicalReaction direction="left-to-right" evidence="3">
        <dbReference type="Rhea" id="RHEA:14654"/>
    </physiologicalReaction>
</comment>
<comment type="catalytic activity">
    <reaction evidence="3">
        <text>3',5'-cyclic GMP + H2O = GMP + H(+)</text>
        <dbReference type="Rhea" id="RHEA:16957"/>
        <dbReference type="ChEBI" id="CHEBI:15377"/>
        <dbReference type="ChEBI" id="CHEBI:15378"/>
        <dbReference type="ChEBI" id="CHEBI:57746"/>
        <dbReference type="ChEBI" id="CHEBI:58115"/>
    </reaction>
    <physiologicalReaction direction="left-to-right" evidence="3">
        <dbReference type="Rhea" id="RHEA:16958"/>
    </physiologicalReaction>
</comment>
<comment type="catalytic activity">
    <reaction evidence="3">
        <text>3',5'-cyclic AMP + H2O = AMP + H(+)</text>
        <dbReference type="Rhea" id="RHEA:25277"/>
        <dbReference type="ChEBI" id="CHEBI:15377"/>
        <dbReference type="ChEBI" id="CHEBI:15378"/>
        <dbReference type="ChEBI" id="CHEBI:58165"/>
        <dbReference type="ChEBI" id="CHEBI:456215"/>
    </reaction>
    <physiologicalReaction direction="left-to-right" evidence="3">
        <dbReference type="Rhea" id="RHEA:25278"/>
    </physiologicalReaction>
</comment>
<comment type="cofactor">
    <cofactor evidence="3">
        <name>Zn(2+)</name>
        <dbReference type="ChEBI" id="CHEBI:29105"/>
    </cofactor>
    <text evidence="3">Binds 2 divalent metal cations per subunit. Site 1 may preferentially bind zinc ions.</text>
</comment>
<comment type="cofactor">
    <cofactor evidence="3">
        <name>Mg(2+)</name>
        <dbReference type="ChEBI" id="CHEBI:18420"/>
    </cofactor>
    <text evidence="3">Binds 2 divalent metal cations per subunit. Site 2 has a preference for magnesium ions.</text>
</comment>
<comment type="activity regulation">
    <text evidence="3">Type I PDE are activated by the binding of calmodulin in the presence of Ca(2+).</text>
</comment>
<comment type="subunit">
    <text evidence="2">Homodimer.</text>
</comment>
<comment type="subcellular location">
    <subcellularLocation>
        <location evidence="3">Cytoplasm</location>
        <location evidence="3">Cytosol</location>
    </subcellularLocation>
</comment>
<comment type="similarity">
    <text evidence="7">Belongs to the cyclic nucleotide phosphodiesterase family. PDE1 subfamily.</text>
</comment>
<keyword id="KW-0114">cAMP</keyword>
<keyword id="KW-0140">cGMP</keyword>
<keyword id="KW-0963">Cytoplasm</keyword>
<keyword id="KW-0378">Hydrolase</keyword>
<keyword id="KW-0460">Magnesium</keyword>
<keyword id="KW-0479">Metal-binding</keyword>
<keyword id="KW-0597">Phosphoprotein</keyword>
<keyword id="KW-0862">Zinc</keyword>
<feature type="chain" id="PRO_0000198788" description="Dual specificity calcium/calmodulin-dependent 3',5'-cyclic nucleotide phosphodiesterase 1B">
    <location>
        <begin position="1"/>
        <end position="535"/>
    </location>
</feature>
<feature type="domain" description="PDEase" evidence="5">
    <location>
        <begin position="145"/>
        <end position="502"/>
    </location>
</feature>
<feature type="region of interest" description="Disordered" evidence="6">
    <location>
        <begin position="1"/>
        <end position="21"/>
    </location>
</feature>
<feature type="region of interest" description="Calmodulin-binding" evidence="2">
    <location>
        <begin position="26"/>
        <end position="46"/>
    </location>
</feature>
<feature type="region of interest" description="Calmodulin-binding" evidence="2">
    <location>
        <begin position="117"/>
        <end position="140"/>
    </location>
</feature>
<feature type="region of interest" description="Disordered" evidence="6">
    <location>
        <begin position="445"/>
        <end position="474"/>
    </location>
</feature>
<feature type="region of interest" description="Disordered" evidence="6">
    <location>
        <begin position="495"/>
        <end position="535"/>
    </location>
</feature>
<feature type="compositionally biased region" description="Polar residues" evidence="6">
    <location>
        <begin position="454"/>
        <end position="463"/>
    </location>
</feature>
<feature type="active site" description="Proton donor" evidence="1">
    <location>
        <position position="222"/>
    </location>
</feature>
<feature type="binding site" evidence="3">
    <location>
        <position position="226"/>
    </location>
    <ligand>
        <name>Zn(2+)</name>
        <dbReference type="ChEBI" id="CHEBI:29105"/>
    </ligand>
</feature>
<feature type="binding site" evidence="3">
    <location>
        <position position="262"/>
    </location>
    <ligand>
        <name>Zn(2+)</name>
        <dbReference type="ChEBI" id="CHEBI:29105"/>
    </ligand>
</feature>
<feature type="binding site" evidence="3">
    <location>
        <position position="263"/>
    </location>
    <ligand>
        <name>Mg(2+)</name>
        <dbReference type="ChEBI" id="CHEBI:18420"/>
    </ligand>
</feature>
<feature type="binding site" evidence="3">
    <location>
        <position position="263"/>
    </location>
    <ligand>
        <name>Zn(2+)</name>
        <dbReference type="ChEBI" id="CHEBI:29105"/>
    </ligand>
</feature>
<feature type="binding site" evidence="3">
    <location>
        <position position="369"/>
    </location>
    <ligand>
        <name>Zn(2+)</name>
        <dbReference type="ChEBI" id="CHEBI:29105"/>
    </ligand>
</feature>
<feature type="modified residue" description="Phosphoserine" evidence="4">
    <location>
        <position position="7"/>
    </location>
</feature>
<feature type="modified residue" description="Phosphoserine" evidence="4">
    <location>
        <position position="14"/>
    </location>
</feature>
<feature type="modified residue" description="Phosphoserine" evidence="4">
    <location>
        <position position="465"/>
    </location>
</feature>
<feature type="modified residue" description="Phosphoserine" evidence="4">
    <location>
        <position position="513"/>
    </location>
</feature>
<feature type="sequence conflict" description="In Ref. 2; AAB50017." evidence="7" ref="2">
    <original>R</original>
    <variation>H</variation>
    <location>
        <position position="382"/>
    </location>
</feature>
<protein>
    <recommendedName>
        <fullName evidence="3">Dual specificity calcium/calmodulin-dependent 3',5'-cyclic nucleotide phosphodiesterase 1B</fullName>
        <shortName>Cam-PDE 1B</shortName>
        <ecNumber evidence="3">3.1.4.17</ecNumber>
    </recommendedName>
</protein>
<gene>
    <name evidence="3" type="primary">PDE1B1</name>
</gene>
<proteinExistence type="evidence at transcript level"/>
<reference key="1">
    <citation type="journal article" date="2011" name="Nat. Biotechnol.">
        <title>The genomic sequence of the Chinese hamster ovary (CHO)-K1 cell line.</title>
        <authorList>
            <person name="Xu X."/>
            <person name="Nagarajan H."/>
            <person name="Lewis N.E."/>
            <person name="Pan S."/>
            <person name="Cai Z."/>
            <person name="Liu X."/>
            <person name="Chen W."/>
            <person name="Xie M."/>
            <person name="Wang W."/>
            <person name="Hammond S."/>
            <person name="Andersen M.R."/>
            <person name="Neff N."/>
            <person name="Passarelli B."/>
            <person name="Koh W."/>
            <person name="Fan H.C."/>
            <person name="Wang J."/>
            <person name="Gui Y."/>
            <person name="Lee K.H."/>
            <person name="Betenbaugh M.J."/>
            <person name="Quake S.R."/>
            <person name="Famili I."/>
            <person name="Palsson B.O."/>
            <person name="Wang J."/>
        </authorList>
    </citation>
    <scope>NUCLEOTIDE SEQUENCE [LARGE SCALE GENOMIC DNA]</scope>
</reference>
<reference key="2">
    <citation type="journal article" date="1997" name="Biochem. J.">
        <title>Receptor-mediated stimulation of lipid signalling pathways in CHO cells elicits the rapid transient induction of the PDE1B isoform of Ca2+/calmodulin-stimulated cAMP phosphodiesterase.</title>
        <authorList>
            <person name="Spence S."/>
            <person name="Rena G."/>
            <person name="Sullivan M."/>
            <person name="Erdogan S."/>
            <person name="Houslay M.D."/>
        </authorList>
    </citation>
    <scope>NUCLEOTIDE SEQUENCE [MRNA] OF 192-390</scope>
</reference>
<accession>Q64395</accession>
<evidence type="ECO:0000250" key="1">
    <source>
        <dbReference type="UniProtKB" id="O76083"/>
    </source>
</evidence>
<evidence type="ECO:0000250" key="2">
    <source>
        <dbReference type="UniProtKB" id="P14100"/>
    </source>
</evidence>
<evidence type="ECO:0000250" key="3">
    <source>
        <dbReference type="UniProtKB" id="Q01064"/>
    </source>
</evidence>
<evidence type="ECO:0000250" key="4">
    <source>
        <dbReference type="UniProtKB" id="Q01065"/>
    </source>
</evidence>
<evidence type="ECO:0000255" key="5">
    <source>
        <dbReference type="PROSITE-ProRule" id="PRU01192"/>
    </source>
</evidence>
<evidence type="ECO:0000256" key="6">
    <source>
        <dbReference type="SAM" id="MobiDB-lite"/>
    </source>
</evidence>
<evidence type="ECO:0000305" key="7"/>
<sequence length="535" mass="61254">MELSPRSPPEMLESDCPSPLELKSAPSKKMWIKLRSLLRYMVKQLENGEVNIEELKKNLEYTASLLEAVYIDETRQILDTEDELRELRSDAVPSEVRDWLASTFTQQTRAKGRRAEEKPKFRSIVHAVQAGIFVERMFRRTYTAVGPTYSTAVHNCLKNLDLWCFDVFSLNRAADDHALRTIVFELLTRHSLISRFKIPTVFLMSFLEALETGYGKYKNPYHNQIHAADVTQTVHCFLLRTGMVHCLSEIEVLAIIFAAAIHDYEHTGTTNSFHIQTKSECAILYNDRSVLENHHISSVFRMMQDDEMNIFINLTKDEFVELRALVIEMVLATDMSCHFQQVKSMKTALQQLERIDKSKALSLLLHAADISHPTKQWSVHSRWTKALMEEFFRQGDKEAELGLPFSPLCDRTSTLVAQSQIGFIDFIVEPTFSVLTDVAEKSVQPLADDDSKSKSQPSFQWRQPSLDVDVGDPNPDVISFRSTWTKYIQENKQKWKERAASGITNQMSIDELSPCEEEAPPSPAEDEHNQNGNLD</sequence>
<dbReference type="EC" id="3.1.4.17" evidence="3"/>
<dbReference type="EMBL" id="AMDS01070813">
    <property type="status" value="NOT_ANNOTATED_CDS"/>
    <property type="molecule type" value="Genomic_DNA"/>
</dbReference>
<dbReference type="EMBL" id="AMDS01070814">
    <property type="status" value="NOT_ANNOTATED_CDS"/>
    <property type="molecule type" value="Genomic_DNA"/>
</dbReference>
<dbReference type="EMBL" id="U40585">
    <property type="protein sequence ID" value="AAB50017.1"/>
    <property type="molecule type" value="mRNA"/>
</dbReference>
<dbReference type="SMR" id="Q64395"/>
<dbReference type="PaxDb" id="10029-XP_007610267.1"/>
<dbReference type="Ensembl" id="ENSCGRT00001021222.1">
    <property type="protein sequence ID" value="ENSCGRP00001016978.1"/>
    <property type="gene ID" value="ENSCGRG00001017137.1"/>
</dbReference>
<dbReference type="eggNOG" id="KOG3688">
    <property type="taxonomic scope" value="Eukaryota"/>
</dbReference>
<dbReference type="GeneTree" id="ENSGT00940000160712"/>
<dbReference type="Proteomes" id="UP000694386">
    <property type="component" value="Unplaced"/>
</dbReference>
<dbReference type="Proteomes" id="UP001108280">
    <property type="component" value="Unplaced"/>
</dbReference>
<dbReference type="GO" id="GO:0005829">
    <property type="term" value="C:cytosol"/>
    <property type="evidence" value="ECO:0000250"/>
    <property type="project" value="UniProtKB"/>
</dbReference>
<dbReference type="GO" id="GO:0004115">
    <property type="term" value="F:3',5'-cyclic-AMP phosphodiesterase activity"/>
    <property type="evidence" value="ECO:0000250"/>
    <property type="project" value="UniProtKB"/>
</dbReference>
<dbReference type="GO" id="GO:0004117">
    <property type="term" value="F:calmodulin-activated dual specificity 3',5'-cyclic-GMP, 3',5'-cyclic-AMP phosphodiesterase activity"/>
    <property type="evidence" value="ECO:0000250"/>
    <property type="project" value="UniProtKB"/>
</dbReference>
<dbReference type="GO" id="GO:0004112">
    <property type="term" value="F:cyclic-nucleotide phosphodiesterase activity"/>
    <property type="evidence" value="ECO:0000314"/>
    <property type="project" value="MGI"/>
</dbReference>
<dbReference type="GO" id="GO:0046872">
    <property type="term" value="F:metal ion binding"/>
    <property type="evidence" value="ECO:0007669"/>
    <property type="project" value="UniProtKB-KW"/>
</dbReference>
<dbReference type="GO" id="GO:0097011">
    <property type="term" value="P:cellular response to granulocyte macrophage colony-stimulating factor stimulus"/>
    <property type="evidence" value="ECO:0007669"/>
    <property type="project" value="Ensembl"/>
</dbReference>
<dbReference type="GO" id="GO:0036006">
    <property type="term" value="P:cellular response to macrophage colony-stimulating factor stimulus"/>
    <property type="evidence" value="ECO:0007669"/>
    <property type="project" value="Ensembl"/>
</dbReference>
<dbReference type="GO" id="GO:0042420">
    <property type="term" value="P:dopamine catabolic process"/>
    <property type="evidence" value="ECO:0007669"/>
    <property type="project" value="Ensembl"/>
</dbReference>
<dbReference type="GO" id="GO:0007626">
    <property type="term" value="P:locomotory behavior"/>
    <property type="evidence" value="ECO:0007669"/>
    <property type="project" value="Ensembl"/>
</dbReference>
<dbReference type="GO" id="GO:0030224">
    <property type="term" value="P:monocyte differentiation"/>
    <property type="evidence" value="ECO:0007669"/>
    <property type="project" value="Ensembl"/>
</dbReference>
<dbReference type="GO" id="GO:0001975">
    <property type="term" value="P:response to amphetamine"/>
    <property type="evidence" value="ECO:0007669"/>
    <property type="project" value="Ensembl"/>
</dbReference>
<dbReference type="GO" id="GO:0042428">
    <property type="term" value="P:serotonin metabolic process"/>
    <property type="evidence" value="ECO:0007669"/>
    <property type="project" value="Ensembl"/>
</dbReference>
<dbReference type="GO" id="GO:0007165">
    <property type="term" value="P:signal transduction"/>
    <property type="evidence" value="ECO:0007669"/>
    <property type="project" value="Ensembl"/>
</dbReference>
<dbReference type="GO" id="GO:0008542">
    <property type="term" value="P:visual learning"/>
    <property type="evidence" value="ECO:0007669"/>
    <property type="project" value="Ensembl"/>
</dbReference>
<dbReference type="CDD" id="cd00077">
    <property type="entry name" value="HDc"/>
    <property type="match status" value="1"/>
</dbReference>
<dbReference type="FunFam" id="1.10.1300.10:FF:000012">
    <property type="entry name" value="Phosphodiesterase"/>
    <property type="match status" value="1"/>
</dbReference>
<dbReference type="Gene3D" id="1.10.1300.10">
    <property type="entry name" value="3'5'-cyclic nucleotide phosphodiesterase, catalytic domain"/>
    <property type="match status" value="1"/>
</dbReference>
<dbReference type="InterPro" id="IPR003607">
    <property type="entry name" value="HD/PDEase_dom"/>
</dbReference>
<dbReference type="InterPro" id="IPR023088">
    <property type="entry name" value="PDEase"/>
</dbReference>
<dbReference type="InterPro" id="IPR002073">
    <property type="entry name" value="PDEase_catalytic_dom"/>
</dbReference>
<dbReference type="InterPro" id="IPR036971">
    <property type="entry name" value="PDEase_catalytic_dom_sf"/>
</dbReference>
<dbReference type="InterPro" id="IPR023174">
    <property type="entry name" value="PDEase_CS"/>
</dbReference>
<dbReference type="InterPro" id="IPR013706">
    <property type="entry name" value="PDEase_N"/>
</dbReference>
<dbReference type="PANTHER" id="PTHR11347">
    <property type="entry name" value="CYCLIC NUCLEOTIDE PHOSPHODIESTERASE"/>
    <property type="match status" value="1"/>
</dbReference>
<dbReference type="Pfam" id="PF00233">
    <property type="entry name" value="PDEase_I"/>
    <property type="match status" value="1"/>
</dbReference>
<dbReference type="Pfam" id="PF08499">
    <property type="entry name" value="PDEase_I_N"/>
    <property type="match status" value="1"/>
</dbReference>
<dbReference type="PRINTS" id="PR00387">
    <property type="entry name" value="PDIESTERASE1"/>
</dbReference>
<dbReference type="SMART" id="SM00471">
    <property type="entry name" value="HDc"/>
    <property type="match status" value="1"/>
</dbReference>
<dbReference type="SUPFAM" id="SSF109604">
    <property type="entry name" value="HD-domain/PDEase-like"/>
    <property type="match status" value="1"/>
</dbReference>
<dbReference type="PROSITE" id="PS00126">
    <property type="entry name" value="PDEASE_I_1"/>
    <property type="match status" value="1"/>
</dbReference>
<dbReference type="PROSITE" id="PS51845">
    <property type="entry name" value="PDEASE_I_2"/>
    <property type="match status" value="1"/>
</dbReference>
<name>PDE1B_CRIGR</name>
<organism>
    <name type="scientific">Cricetulus griseus</name>
    <name type="common">Chinese hamster</name>
    <name type="synonym">Cricetulus barabensis griseus</name>
    <dbReference type="NCBI Taxonomy" id="10029"/>
    <lineage>
        <taxon>Eukaryota</taxon>
        <taxon>Metazoa</taxon>
        <taxon>Chordata</taxon>
        <taxon>Craniata</taxon>
        <taxon>Vertebrata</taxon>
        <taxon>Euteleostomi</taxon>
        <taxon>Mammalia</taxon>
        <taxon>Eutheria</taxon>
        <taxon>Euarchontoglires</taxon>
        <taxon>Glires</taxon>
        <taxon>Rodentia</taxon>
        <taxon>Myomorpha</taxon>
        <taxon>Muroidea</taxon>
        <taxon>Cricetidae</taxon>
        <taxon>Cricetinae</taxon>
        <taxon>Cricetulus</taxon>
    </lineage>
</organism>